<keyword id="KW-0413">Isomerase</keyword>
<sequence>MTPFMTEDFLLDTEFARRLYHDYAKDQPIFDYHCHLPPQQIAEDYRFKNLYDIWLKGDHYKWRAMRTNGVAERLCTGDASDREKFDAWAATVPHTIGNPLYHWTHLELRRPFGITGKLLSPSTADEIWNECNELLAQDNFSARGIMQQMNVKMVGTTDDPIDSLEHHAEIAKDGSFTIKVLPSWRPDKAFNIEQATFNDYMAKLGEVSDTDIRRFADLQTALTKRLDHFAAHGCKVSDHALDVVMFAEANEAELDSILARRLAGETLSEHEVAQFKTAVLVFLGAEYARRGWVQQYHIGALRNNNLRQFKLLGPDVGFDSINDRPMAEELSKLLSKQNEENLLPKTILYCLNPRDNEVLGTMIGNFQGEGMPGKMQFGSGWWFNDQKDGMERQMTQLAQLGLLSRFVGMLTDSRSFLSYTRHEYFRRILCQMIGRWVEAGEAPADINLLGEMVKNICFNNARDYFAIELN</sequence>
<gene>
    <name evidence="1" type="primary">uxaC</name>
    <name type="ordered locus">EcolC_0608</name>
</gene>
<evidence type="ECO:0000255" key="1">
    <source>
        <dbReference type="HAMAP-Rule" id="MF_00675"/>
    </source>
</evidence>
<name>UXAC_ECOLC</name>
<dbReference type="EC" id="5.3.1.12" evidence="1"/>
<dbReference type="EMBL" id="CP000946">
    <property type="protein sequence ID" value="ACA76284.1"/>
    <property type="molecule type" value="Genomic_DNA"/>
</dbReference>
<dbReference type="RefSeq" id="WP_000187442.1">
    <property type="nucleotide sequence ID" value="NZ_MTFT01000027.1"/>
</dbReference>
<dbReference type="SMR" id="B1IRM5"/>
<dbReference type="GeneID" id="93778895"/>
<dbReference type="KEGG" id="ecl:EcolC_0608"/>
<dbReference type="HOGENOM" id="CLU_044465_1_0_6"/>
<dbReference type="UniPathway" id="UPA00246"/>
<dbReference type="GO" id="GO:0008880">
    <property type="term" value="F:glucuronate isomerase activity"/>
    <property type="evidence" value="ECO:0007669"/>
    <property type="project" value="UniProtKB-UniRule"/>
</dbReference>
<dbReference type="GO" id="GO:0019698">
    <property type="term" value="P:D-galacturonate catabolic process"/>
    <property type="evidence" value="ECO:0007669"/>
    <property type="project" value="TreeGrafter"/>
</dbReference>
<dbReference type="GO" id="GO:0042840">
    <property type="term" value="P:D-glucuronate catabolic process"/>
    <property type="evidence" value="ECO:0007669"/>
    <property type="project" value="TreeGrafter"/>
</dbReference>
<dbReference type="FunFam" id="1.10.2020.10:FF:000001">
    <property type="entry name" value="Uronate isomerase"/>
    <property type="match status" value="1"/>
</dbReference>
<dbReference type="Gene3D" id="3.20.20.140">
    <property type="entry name" value="Metal-dependent hydrolases"/>
    <property type="match status" value="1"/>
</dbReference>
<dbReference type="Gene3D" id="1.10.2020.10">
    <property type="entry name" value="uronate isomerase, domain 2, chain A"/>
    <property type="match status" value="1"/>
</dbReference>
<dbReference type="HAMAP" id="MF_00675">
    <property type="entry name" value="UxaC"/>
    <property type="match status" value="1"/>
</dbReference>
<dbReference type="InterPro" id="IPR032466">
    <property type="entry name" value="Metal_Hydrolase"/>
</dbReference>
<dbReference type="InterPro" id="IPR003766">
    <property type="entry name" value="Uronate_isomerase"/>
</dbReference>
<dbReference type="NCBIfam" id="NF002794">
    <property type="entry name" value="PRK02925.1"/>
    <property type="match status" value="1"/>
</dbReference>
<dbReference type="PANTHER" id="PTHR30068">
    <property type="entry name" value="URONATE ISOMERASE"/>
    <property type="match status" value="1"/>
</dbReference>
<dbReference type="PANTHER" id="PTHR30068:SF4">
    <property type="entry name" value="URONATE ISOMERASE"/>
    <property type="match status" value="1"/>
</dbReference>
<dbReference type="Pfam" id="PF02614">
    <property type="entry name" value="UxaC"/>
    <property type="match status" value="1"/>
</dbReference>
<dbReference type="SUPFAM" id="SSF51556">
    <property type="entry name" value="Metallo-dependent hydrolases"/>
    <property type="match status" value="1"/>
</dbReference>
<feature type="chain" id="PRO_1000082961" description="Uronate isomerase">
    <location>
        <begin position="1"/>
        <end position="470"/>
    </location>
</feature>
<proteinExistence type="inferred from homology"/>
<comment type="catalytic activity">
    <reaction evidence="1">
        <text>D-glucuronate = D-fructuronate</text>
        <dbReference type="Rhea" id="RHEA:13049"/>
        <dbReference type="ChEBI" id="CHEBI:58720"/>
        <dbReference type="ChEBI" id="CHEBI:59863"/>
        <dbReference type="EC" id="5.3.1.12"/>
    </reaction>
</comment>
<comment type="catalytic activity">
    <reaction evidence="1">
        <text>aldehydo-D-galacturonate = keto-D-tagaturonate</text>
        <dbReference type="Rhea" id="RHEA:27702"/>
        <dbReference type="ChEBI" id="CHEBI:12952"/>
        <dbReference type="ChEBI" id="CHEBI:17886"/>
        <dbReference type="EC" id="5.3.1.12"/>
    </reaction>
</comment>
<comment type="pathway">
    <text evidence="1">Carbohydrate metabolism; pentose and glucuronate interconversion.</text>
</comment>
<comment type="similarity">
    <text evidence="1">Belongs to the metallo-dependent hydrolases superfamily. Uronate isomerase family.</text>
</comment>
<protein>
    <recommendedName>
        <fullName evidence="1">Uronate isomerase</fullName>
        <ecNumber evidence="1">5.3.1.12</ecNumber>
    </recommendedName>
    <alternativeName>
        <fullName evidence="1">Glucuronate isomerase</fullName>
    </alternativeName>
    <alternativeName>
        <fullName evidence="1">Uronic isomerase</fullName>
    </alternativeName>
</protein>
<organism>
    <name type="scientific">Escherichia coli (strain ATCC 8739 / DSM 1576 / NBRC 3972 / NCIMB 8545 / WDCM 00012 / Crooks)</name>
    <dbReference type="NCBI Taxonomy" id="481805"/>
    <lineage>
        <taxon>Bacteria</taxon>
        <taxon>Pseudomonadati</taxon>
        <taxon>Pseudomonadota</taxon>
        <taxon>Gammaproteobacteria</taxon>
        <taxon>Enterobacterales</taxon>
        <taxon>Enterobacteriaceae</taxon>
        <taxon>Escherichia</taxon>
    </lineage>
</organism>
<accession>B1IRM5</accession>
<reference key="1">
    <citation type="submission" date="2008-02" db="EMBL/GenBank/DDBJ databases">
        <title>Complete sequence of Escherichia coli C str. ATCC 8739.</title>
        <authorList>
            <person name="Copeland A."/>
            <person name="Lucas S."/>
            <person name="Lapidus A."/>
            <person name="Glavina del Rio T."/>
            <person name="Dalin E."/>
            <person name="Tice H."/>
            <person name="Bruce D."/>
            <person name="Goodwin L."/>
            <person name="Pitluck S."/>
            <person name="Kiss H."/>
            <person name="Brettin T."/>
            <person name="Detter J.C."/>
            <person name="Han C."/>
            <person name="Kuske C.R."/>
            <person name="Schmutz J."/>
            <person name="Larimer F."/>
            <person name="Land M."/>
            <person name="Hauser L."/>
            <person name="Kyrpides N."/>
            <person name="Mikhailova N."/>
            <person name="Ingram L."/>
            <person name="Richardson P."/>
        </authorList>
    </citation>
    <scope>NUCLEOTIDE SEQUENCE [LARGE SCALE GENOMIC DNA]</scope>
    <source>
        <strain>ATCC 8739 / DSM 1576 / NBRC 3972 / NCIMB 8545 / WDCM 00012 / Crooks</strain>
    </source>
</reference>